<proteinExistence type="inferred from homology"/>
<keyword id="KW-0028">Amino-acid biosynthesis</keyword>
<keyword id="KW-0057">Aromatic amino acid biosynthesis</keyword>
<keyword id="KW-0521">NADP</keyword>
<keyword id="KW-0560">Oxidoreductase</keyword>
<keyword id="KW-1185">Reference proteome</keyword>
<reference key="1">
    <citation type="journal article" date="2009" name="J. Bacteriol.">
        <title>Complete genome sequence and comparative genome analysis of enteropathogenic Escherichia coli O127:H6 strain E2348/69.</title>
        <authorList>
            <person name="Iguchi A."/>
            <person name="Thomson N.R."/>
            <person name="Ogura Y."/>
            <person name="Saunders D."/>
            <person name="Ooka T."/>
            <person name="Henderson I.R."/>
            <person name="Harris D."/>
            <person name="Asadulghani M."/>
            <person name="Kurokawa K."/>
            <person name="Dean P."/>
            <person name="Kenny B."/>
            <person name="Quail M.A."/>
            <person name="Thurston S."/>
            <person name="Dougan G."/>
            <person name="Hayashi T."/>
            <person name="Parkhill J."/>
            <person name="Frankel G."/>
        </authorList>
    </citation>
    <scope>NUCLEOTIDE SEQUENCE [LARGE SCALE GENOMIC DNA]</scope>
    <source>
        <strain>E2348/69 / EPEC</strain>
    </source>
</reference>
<comment type="function">
    <text evidence="1">Involved in the biosynthesis of the chorismate, which leads to the biosynthesis of aromatic amino acids. Catalyzes the reversible NADPH linked reduction of 3-dehydroshikimate (DHSA) to yield shikimate (SA).</text>
</comment>
<comment type="catalytic activity">
    <reaction evidence="1">
        <text>shikimate + NADP(+) = 3-dehydroshikimate + NADPH + H(+)</text>
        <dbReference type="Rhea" id="RHEA:17737"/>
        <dbReference type="ChEBI" id="CHEBI:15378"/>
        <dbReference type="ChEBI" id="CHEBI:16630"/>
        <dbReference type="ChEBI" id="CHEBI:36208"/>
        <dbReference type="ChEBI" id="CHEBI:57783"/>
        <dbReference type="ChEBI" id="CHEBI:58349"/>
        <dbReference type="EC" id="1.1.1.25"/>
    </reaction>
</comment>
<comment type="pathway">
    <text evidence="1">Metabolic intermediate biosynthesis; chorismate biosynthesis; chorismate from D-erythrose 4-phosphate and phosphoenolpyruvate: step 4/7.</text>
</comment>
<comment type="subunit">
    <text evidence="1">Homodimer.</text>
</comment>
<comment type="similarity">
    <text evidence="1">Belongs to the shikimate dehydrogenase family.</text>
</comment>
<gene>
    <name evidence="1" type="primary">aroE</name>
    <name type="ordered locus">E2348C_3544</name>
</gene>
<accession>B7UK05</accession>
<protein>
    <recommendedName>
        <fullName evidence="1">Shikimate dehydrogenase (NADP(+))</fullName>
        <shortName evidence="1">SDH</shortName>
        <ecNumber evidence="1">1.1.1.25</ecNumber>
    </recommendedName>
</protein>
<evidence type="ECO:0000255" key="1">
    <source>
        <dbReference type="HAMAP-Rule" id="MF_00222"/>
    </source>
</evidence>
<organism>
    <name type="scientific">Escherichia coli O127:H6 (strain E2348/69 / EPEC)</name>
    <dbReference type="NCBI Taxonomy" id="574521"/>
    <lineage>
        <taxon>Bacteria</taxon>
        <taxon>Pseudomonadati</taxon>
        <taxon>Pseudomonadota</taxon>
        <taxon>Gammaproteobacteria</taxon>
        <taxon>Enterobacterales</taxon>
        <taxon>Enterobacteriaceae</taxon>
        <taxon>Escherichia</taxon>
    </lineage>
</organism>
<name>AROE_ECO27</name>
<dbReference type="EC" id="1.1.1.25" evidence="1"/>
<dbReference type="EMBL" id="FM180568">
    <property type="protein sequence ID" value="CAS11092.1"/>
    <property type="molecule type" value="Genomic_DNA"/>
</dbReference>
<dbReference type="RefSeq" id="WP_000451233.1">
    <property type="nucleotide sequence ID" value="NC_011601.1"/>
</dbReference>
<dbReference type="SMR" id="B7UK05"/>
<dbReference type="KEGG" id="ecg:E2348C_3544"/>
<dbReference type="HOGENOM" id="CLU_044063_2_1_6"/>
<dbReference type="UniPathway" id="UPA00053">
    <property type="reaction ID" value="UER00087"/>
</dbReference>
<dbReference type="Proteomes" id="UP000008205">
    <property type="component" value="Chromosome"/>
</dbReference>
<dbReference type="GO" id="GO:0005829">
    <property type="term" value="C:cytosol"/>
    <property type="evidence" value="ECO:0007669"/>
    <property type="project" value="TreeGrafter"/>
</dbReference>
<dbReference type="GO" id="GO:0050661">
    <property type="term" value="F:NADP binding"/>
    <property type="evidence" value="ECO:0007669"/>
    <property type="project" value="InterPro"/>
</dbReference>
<dbReference type="GO" id="GO:0004764">
    <property type="term" value="F:shikimate 3-dehydrogenase (NADP+) activity"/>
    <property type="evidence" value="ECO:0007669"/>
    <property type="project" value="UniProtKB-UniRule"/>
</dbReference>
<dbReference type="GO" id="GO:0008652">
    <property type="term" value="P:amino acid biosynthetic process"/>
    <property type="evidence" value="ECO:0007669"/>
    <property type="project" value="UniProtKB-KW"/>
</dbReference>
<dbReference type="GO" id="GO:0009073">
    <property type="term" value="P:aromatic amino acid family biosynthetic process"/>
    <property type="evidence" value="ECO:0007669"/>
    <property type="project" value="UniProtKB-KW"/>
</dbReference>
<dbReference type="GO" id="GO:0009423">
    <property type="term" value="P:chorismate biosynthetic process"/>
    <property type="evidence" value="ECO:0007669"/>
    <property type="project" value="UniProtKB-UniRule"/>
</dbReference>
<dbReference type="GO" id="GO:0019632">
    <property type="term" value="P:shikimate metabolic process"/>
    <property type="evidence" value="ECO:0007669"/>
    <property type="project" value="InterPro"/>
</dbReference>
<dbReference type="CDD" id="cd01065">
    <property type="entry name" value="NAD_bind_Shikimate_DH"/>
    <property type="match status" value="1"/>
</dbReference>
<dbReference type="FunFam" id="3.40.50.10860:FF:000006">
    <property type="entry name" value="Shikimate dehydrogenase (NADP(+))"/>
    <property type="match status" value="1"/>
</dbReference>
<dbReference type="FunFam" id="3.40.50.720:FF:000104">
    <property type="entry name" value="Shikimate dehydrogenase (NADP(+))"/>
    <property type="match status" value="1"/>
</dbReference>
<dbReference type="Gene3D" id="3.40.50.10860">
    <property type="entry name" value="Leucine Dehydrogenase, chain A, domain 1"/>
    <property type="match status" value="1"/>
</dbReference>
<dbReference type="Gene3D" id="3.40.50.720">
    <property type="entry name" value="NAD(P)-binding Rossmann-like Domain"/>
    <property type="match status" value="1"/>
</dbReference>
<dbReference type="HAMAP" id="MF_00222">
    <property type="entry name" value="Shikimate_DH_AroE"/>
    <property type="match status" value="1"/>
</dbReference>
<dbReference type="InterPro" id="IPR046346">
    <property type="entry name" value="Aminoacid_DH-like_N_sf"/>
</dbReference>
<dbReference type="InterPro" id="IPR036291">
    <property type="entry name" value="NAD(P)-bd_dom_sf"/>
</dbReference>
<dbReference type="InterPro" id="IPR041121">
    <property type="entry name" value="SDH_C"/>
</dbReference>
<dbReference type="InterPro" id="IPR011342">
    <property type="entry name" value="Shikimate_DH"/>
</dbReference>
<dbReference type="InterPro" id="IPR013708">
    <property type="entry name" value="Shikimate_DH-bd_N"/>
</dbReference>
<dbReference type="InterPro" id="IPR022893">
    <property type="entry name" value="Shikimate_DH_fam"/>
</dbReference>
<dbReference type="InterPro" id="IPR006151">
    <property type="entry name" value="Shikm_DH/Glu-tRNA_Rdtase"/>
</dbReference>
<dbReference type="NCBIfam" id="TIGR00507">
    <property type="entry name" value="aroE"/>
    <property type="match status" value="1"/>
</dbReference>
<dbReference type="NCBIfam" id="NF001310">
    <property type="entry name" value="PRK00258.1-2"/>
    <property type="match status" value="1"/>
</dbReference>
<dbReference type="PANTHER" id="PTHR21089:SF1">
    <property type="entry name" value="BIFUNCTIONAL 3-DEHYDROQUINATE DEHYDRATASE_SHIKIMATE DEHYDROGENASE, CHLOROPLASTIC"/>
    <property type="match status" value="1"/>
</dbReference>
<dbReference type="PANTHER" id="PTHR21089">
    <property type="entry name" value="SHIKIMATE DEHYDROGENASE"/>
    <property type="match status" value="1"/>
</dbReference>
<dbReference type="Pfam" id="PF18317">
    <property type="entry name" value="SDH_C"/>
    <property type="match status" value="1"/>
</dbReference>
<dbReference type="Pfam" id="PF01488">
    <property type="entry name" value="Shikimate_DH"/>
    <property type="match status" value="1"/>
</dbReference>
<dbReference type="Pfam" id="PF08501">
    <property type="entry name" value="Shikimate_dh_N"/>
    <property type="match status" value="1"/>
</dbReference>
<dbReference type="SUPFAM" id="SSF53223">
    <property type="entry name" value="Aminoacid dehydrogenase-like, N-terminal domain"/>
    <property type="match status" value="1"/>
</dbReference>
<dbReference type="SUPFAM" id="SSF51735">
    <property type="entry name" value="NAD(P)-binding Rossmann-fold domains"/>
    <property type="match status" value="1"/>
</dbReference>
<feature type="chain" id="PRO_1000124883" description="Shikimate dehydrogenase (NADP(+))">
    <location>
        <begin position="1"/>
        <end position="272"/>
    </location>
</feature>
<feature type="active site" description="Proton acceptor" evidence="1">
    <location>
        <position position="65"/>
    </location>
</feature>
<feature type="binding site" evidence="1">
    <location>
        <begin position="14"/>
        <end position="16"/>
    </location>
    <ligand>
        <name>shikimate</name>
        <dbReference type="ChEBI" id="CHEBI:36208"/>
    </ligand>
</feature>
<feature type="binding site" evidence="1">
    <location>
        <position position="61"/>
    </location>
    <ligand>
        <name>shikimate</name>
        <dbReference type="ChEBI" id="CHEBI:36208"/>
    </ligand>
</feature>
<feature type="binding site" evidence="1">
    <location>
        <position position="77"/>
    </location>
    <ligand>
        <name>NADP(+)</name>
        <dbReference type="ChEBI" id="CHEBI:58349"/>
    </ligand>
</feature>
<feature type="binding site" evidence="1">
    <location>
        <position position="86"/>
    </location>
    <ligand>
        <name>shikimate</name>
        <dbReference type="ChEBI" id="CHEBI:36208"/>
    </ligand>
</feature>
<feature type="binding site" evidence="1">
    <location>
        <position position="102"/>
    </location>
    <ligand>
        <name>shikimate</name>
        <dbReference type="ChEBI" id="CHEBI:36208"/>
    </ligand>
</feature>
<feature type="binding site" evidence="1">
    <location>
        <begin position="126"/>
        <end position="130"/>
    </location>
    <ligand>
        <name>NADP(+)</name>
        <dbReference type="ChEBI" id="CHEBI:58349"/>
    </ligand>
</feature>
<feature type="binding site" evidence="1">
    <location>
        <begin position="149"/>
        <end position="154"/>
    </location>
    <ligand>
        <name>NADP(+)</name>
        <dbReference type="ChEBI" id="CHEBI:58349"/>
    </ligand>
</feature>
<feature type="binding site" evidence="1">
    <location>
        <position position="213"/>
    </location>
    <ligand>
        <name>NADP(+)</name>
        <dbReference type="ChEBI" id="CHEBI:58349"/>
    </ligand>
</feature>
<feature type="binding site" evidence="1">
    <location>
        <position position="215"/>
    </location>
    <ligand>
        <name>shikimate</name>
        <dbReference type="ChEBI" id="CHEBI:36208"/>
    </ligand>
</feature>
<feature type="binding site" evidence="1">
    <location>
        <position position="237"/>
    </location>
    <ligand>
        <name>NADP(+)</name>
        <dbReference type="ChEBI" id="CHEBI:58349"/>
    </ligand>
</feature>
<sequence length="272" mass="29424">METYAVFGNPIAHSKSPFIHQQFAQQLNIEHPYGRVLAPINDFINTLNAFFSAGGKGANVTVPFKEEAFARADELTERAALAGAVNTLKRLEDGRLLGDNTDGVGLLSDLERLSFIRPGLRILLIGAGGASRGVLLPLLSLDCAVTITNRTVFRAEELAKLFAHTGSIQALGMDKLEGHEFDLIINATSSGISGDIPAIPSSLIHPGIYCYDMFYQKGKTPFLAWCEQRGSKRNADGLGMLVAQAAHAFLLWHGVLPDVEPVIKLLQQELSA</sequence>